<proteinExistence type="inferred from homology"/>
<gene>
    <name type="primary">ygfK</name>
    <name type="ordered locus">Z4217</name>
    <name type="ordered locus">ECs3751</name>
</gene>
<accession>Q8XD75</accession>
<sequence>MGDIMRPIPFEELLTRIFDEYQQQRSIFGIPEQQFYSPVKGKTVSVFGETCATPVGPAAGPHTQLAQNIVTSWLTGGRFIELKTVQILDRLELEKPCIDAEDECFNTEWSTEFTLLKAWDEYLKAWFALHLLEAMFQPSDSGKSFIFNMSVGYNLEGIKQPPMQQFIDNMMDASDHPKFAQYRDTLNKLLQDDAFLARHGLQEKRESLQALPARIPTSMVHGVTLSTMHGCPPHEIEAICRYMLEEKGLNTFVKLNPTLLGYARVREILDVCGFGYIGLKEESFDHDLKLTQALEMLERLMALAKEKSLGFGVKLTNTLGTINNKGALPGEEMYMSGRALFPLSINVAAVLSRAFDGKLPISYSGGASQLTIRDIFDTGIRPITMATDLLKPGGYLRLSACMRELEGSDAWGLDHVDVERLNRLAADALTMEYTQKHWKPEERIEVAEDLPLTDCYVAPCVTACAIKQDIPEYIRLLGEHRYADALELIYQRNALPAITGHICDHQCQYNCTRLDYDSALNIRELKKVALEKGWDEYKQRWHKPAGSGSRHPVAVIGAGPAGLAAGYFLARAGHPVTLFEREANAGGVVKNIIPQFRIPAELIQHDIDFVAAHGVKFEYGCSPDLTVEQLKNQDFHYVLIATGTDKNSGVKLAGDNQNVLKSLPFLREYNKGTALKLGKHVVVVGAGNTAMDCARAALRVPGVEKATVVYRRSLQEMPAWREEYEEALHDGVEFRFLNNPERFDADGTLTLRVMSLGEPDEKGRRRPVETNETVTLHVDSLITAIGEQQDTEALNAMGVPLDKNGWPDVDHNGETRLTDVFMIGDVQRGPSSIVAAVGTARRATDAILSRENIRSHQNDKYWNNVNPAEIYQRKGDISITLVNSDDRDAFVAQEAARCLECNYVCSKCVDVCPNRANVSIAVPGFQNRFQTLHLDAYCNECGNCAQFCPWNGKPYKDKITVFSLAQDFDNSSNPGFLVEDCRVRVRLNNQSWVLNIDSEGQFNNVPPELNDMCRIISHVHQHHHYLLGRVEV</sequence>
<organism>
    <name type="scientific">Escherichia coli O157:H7</name>
    <dbReference type="NCBI Taxonomy" id="83334"/>
    <lineage>
        <taxon>Bacteria</taxon>
        <taxon>Pseudomonadati</taxon>
        <taxon>Pseudomonadota</taxon>
        <taxon>Gammaproteobacteria</taxon>
        <taxon>Enterobacterales</taxon>
        <taxon>Enterobacteriaceae</taxon>
        <taxon>Escherichia</taxon>
    </lineage>
</organism>
<evidence type="ECO:0000250" key="1">
    <source>
        <dbReference type="UniProtKB" id="Q46811"/>
    </source>
</evidence>
<evidence type="ECO:0000255" key="2">
    <source>
        <dbReference type="PROSITE-ProRule" id="PRU00711"/>
    </source>
</evidence>
<dbReference type="EMBL" id="AE005174">
    <property type="protein sequence ID" value="AAG58007.1"/>
    <property type="molecule type" value="Genomic_DNA"/>
</dbReference>
<dbReference type="EMBL" id="BA000007">
    <property type="protein sequence ID" value="BAB37174.1"/>
    <property type="molecule type" value="Genomic_DNA"/>
</dbReference>
<dbReference type="PIR" id="C85943">
    <property type="entry name" value="C85943"/>
</dbReference>
<dbReference type="PIR" id="G91097">
    <property type="entry name" value="G91097"/>
</dbReference>
<dbReference type="RefSeq" id="NP_311778.1">
    <property type="nucleotide sequence ID" value="NC_002695.1"/>
</dbReference>
<dbReference type="RefSeq" id="WP_000502397.1">
    <property type="nucleotide sequence ID" value="NZ_VOAI01000003.1"/>
</dbReference>
<dbReference type="SMR" id="Q8XD75"/>
<dbReference type="STRING" id="155864.Z4217"/>
<dbReference type="GeneID" id="916425"/>
<dbReference type="KEGG" id="ece:Z4217"/>
<dbReference type="KEGG" id="ecs:ECs_3751"/>
<dbReference type="PATRIC" id="fig|386585.9.peg.3913"/>
<dbReference type="eggNOG" id="COG0493">
    <property type="taxonomic scope" value="Bacteria"/>
</dbReference>
<dbReference type="eggNOG" id="COG1145">
    <property type="taxonomic scope" value="Bacteria"/>
</dbReference>
<dbReference type="HOGENOM" id="CLU_014791_0_0_6"/>
<dbReference type="OMA" id="NECGNCE"/>
<dbReference type="Proteomes" id="UP000000558">
    <property type="component" value="Chromosome"/>
</dbReference>
<dbReference type="Proteomes" id="UP000002519">
    <property type="component" value="Chromosome"/>
</dbReference>
<dbReference type="GO" id="GO:0051539">
    <property type="term" value="F:4 iron, 4 sulfur cluster binding"/>
    <property type="evidence" value="ECO:0007669"/>
    <property type="project" value="UniProtKB-KW"/>
</dbReference>
<dbReference type="GO" id="GO:0046872">
    <property type="term" value="F:metal ion binding"/>
    <property type="evidence" value="ECO:0007669"/>
    <property type="project" value="UniProtKB-KW"/>
</dbReference>
<dbReference type="GO" id="GO:0016491">
    <property type="term" value="F:oxidoreductase activity"/>
    <property type="evidence" value="ECO:0007669"/>
    <property type="project" value="InterPro"/>
</dbReference>
<dbReference type="Gene3D" id="1.10.1060.10">
    <property type="entry name" value="Alpha-helical ferredoxin"/>
    <property type="match status" value="1"/>
</dbReference>
<dbReference type="Gene3D" id="3.50.50.60">
    <property type="entry name" value="FAD/NAD(P)-binding domain"/>
    <property type="match status" value="2"/>
</dbReference>
<dbReference type="InterPro" id="IPR017896">
    <property type="entry name" value="4Fe4S_Fe-S-bd"/>
</dbReference>
<dbReference type="InterPro" id="IPR017900">
    <property type="entry name" value="4Fe4S_Fe_S_CS"/>
</dbReference>
<dbReference type="InterPro" id="IPR028261">
    <property type="entry name" value="DPD_II"/>
</dbReference>
<dbReference type="InterPro" id="IPR036188">
    <property type="entry name" value="FAD/NAD-bd_sf"/>
</dbReference>
<dbReference type="InterPro" id="IPR023753">
    <property type="entry name" value="FAD/NAD-binding_dom"/>
</dbReference>
<dbReference type="InterPro" id="IPR009051">
    <property type="entry name" value="Helical_ferredxn"/>
</dbReference>
<dbReference type="InterPro" id="IPR017701">
    <property type="entry name" value="Se_rdtase_YgfK"/>
</dbReference>
<dbReference type="NCBIfam" id="TIGR03315">
    <property type="entry name" value="Se_ygfK"/>
    <property type="match status" value="1"/>
</dbReference>
<dbReference type="PANTHER" id="PTHR42783">
    <property type="entry name" value="GLUTAMATE SYNTHASE [NADPH] SMALL CHAIN"/>
    <property type="match status" value="1"/>
</dbReference>
<dbReference type="PANTHER" id="PTHR42783:SF3">
    <property type="entry name" value="GLUTAMATE SYNTHASE [NADPH] SMALL CHAIN-RELATED"/>
    <property type="match status" value="1"/>
</dbReference>
<dbReference type="Pfam" id="PF14691">
    <property type="entry name" value="Fer4_20"/>
    <property type="match status" value="1"/>
</dbReference>
<dbReference type="Pfam" id="PF07992">
    <property type="entry name" value="Pyr_redox_2"/>
    <property type="match status" value="1"/>
</dbReference>
<dbReference type="PRINTS" id="PR00419">
    <property type="entry name" value="ADXRDTASE"/>
</dbReference>
<dbReference type="SUPFAM" id="SSF46548">
    <property type="entry name" value="alpha-helical ferredoxin"/>
    <property type="match status" value="2"/>
</dbReference>
<dbReference type="SUPFAM" id="SSF51395">
    <property type="entry name" value="FMN-linked oxidoreductases"/>
    <property type="match status" value="1"/>
</dbReference>
<dbReference type="SUPFAM" id="SSF51971">
    <property type="entry name" value="Nucleotide-binding domain"/>
    <property type="match status" value="1"/>
</dbReference>
<dbReference type="PROSITE" id="PS00198">
    <property type="entry name" value="4FE4S_FER_1"/>
    <property type="match status" value="1"/>
</dbReference>
<dbReference type="PROSITE" id="PS51379">
    <property type="entry name" value="4FE4S_FER_2"/>
    <property type="match status" value="1"/>
</dbReference>
<protein>
    <recommendedName>
        <fullName evidence="1">Putative oxidoreductase YgfK</fullName>
    </recommendedName>
</protein>
<keyword id="KW-0004">4Fe-4S</keyword>
<keyword id="KW-0408">Iron</keyword>
<keyword id="KW-0411">Iron-sulfur</keyword>
<keyword id="KW-0479">Metal-binding</keyword>
<keyword id="KW-1185">Reference proteome</keyword>
<feature type="chain" id="PRO_0000201330" description="Putative oxidoreductase YgfK">
    <location>
        <begin position="1"/>
        <end position="1032"/>
    </location>
</feature>
<feature type="domain" description="4Fe-4S ferredoxin-type" evidence="2">
    <location>
        <begin position="928"/>
        <end position="958"/>
    </location>
</feature>
<feature type="binding site" evidence="2">
    <location>
        <position position="938"/>
    </location>
    <ligand>
        <name>[4Fe-4S] cluster</name>
        <dbReference type="ChEBI" id="CHEBI:49883"/>
    </ligand>
</feature>
<feature type="binding site" evidence="2">
    <location>
        <position position="941"/>
    </location>
    <ligand>
        <name>[4Fe-4S] cluster</name>
        <dbReference type="ChEBI" id="CHEBI:49883"/>
    </ligand>
</feature>
<feature type="binding site" evidence="2">
    <location>
        <position position="944"/>
    </location>
    <ligand>
        <name>[4Fe-4S] cluster</name>
        <dbReference type="ChEBI" id="CHEBI:49883"/>
    </ligand>
</feature>
<feature type="binding site" evidence="2">
    <location>
        <position position="948"/>
    </location>
    <ligand>
        <name>[4Fe-4S] cluster</name>
        <dbReference type="ChEBI" id="CHEBI:49883"/>
    </ligand>
</feature>
<reference key="1">
    <citation type="journal article" date="2001" name="Nature">
        <title>Genome sequence of enterohaemorrhagic Escherichia coli O157:H7.</title>
        <authorList>
            <person name="Perna N.T."/>
            <person name="Plunkett G. III"/>
            <person name="Burland V."/>
            <person name="Mau B."/>
            <person name="Glasner J.D."/>
            <person name="Rose D.J."/>
            <person name="Mayhew G.F."/>
            <person name="Evans P.S."/>
            <person name="Gregor J."/>
            <person name="Kirkpatrick H.A."/>
            <person name="Posfai G."/>
            <person name="Hackett J."/>
            <person name="Klink S."/>
            <person name="Boutin A."/>
            <person name="Shao Y."/>
            <person name="Miller L."/>
            <person name="Grotbeck E.J."/>
            <person name="Davis N.W."/>
            <person name="Lim A."/>
            <person name="Dimalanta E.T."/>
            <person name="Potamousis K."/>
            <person name="Apodaca J."/>
            <person name="Anantharaman T.S."/>
            <person name="Lin J."/>
            <person name="Yen G."/>
            <person name="Schwartz D.C."/>
            <person name="Welch R.A."/>
            <person name="Blattner F.R."/>
        </authorList>
    </citation>
    <scope>NUCLEOTIDE SEQUENCE [LARGE SCALE GENOMIC DNA]</scope>
    <source>
        <strain>O157:H7 / EDL933 / ATCC 700927 / EHEC</strain>
    </source>
</reference>
<reference key="2">
    <citation type="journal article" date="2001" name="DNA Res.">
        <title>Complete genome sequence of enterohemorrhagic Escherichia coli O157:H7 and genomic comparison with a laboratory strain K-12.</title>
        <authorList>
            <person name="Hayashi T."/>
            <person name="Makino K."/>
            <person name="Ohnishi M."/>
            <person name="Kurokawa K."/>
            <person name="Ishii K."/>
            <person name="Yokoyama K."/>
            <person name="Han C.-G."/>
            <person name="Ohtsubo E."/>
            <person name="Nakayama K."/>
            <person name="Murata T."/>
            <person name="Tanaka M."/>
            <person name="Tobe T."/>
            <person name="Iida T."/>
            <person name="Takami H."/>
            <person name="Honda T."/>
            <person name="Sasakawa C."/>
            <person name="Ogasawara N."/>
            <person name="Yasunaga T."/>
            <person name="Kuhara S."/>
            <person name="Shiba T."/>
            <person name="Hattori M."/>
            <person name="Shinagawa H."/>
        </authorList>
    </citation>
    <scope>NUCLEOTIDE SEQUENCE [LARGE SCALE GENOMIC DNA]</scope>
    <source>
        <strain>O157:H7 / Sakai / RIMD 0509952 / EHEC</strain>
    </source>
</reference>
<comment type="function">
    <text evidence="1">Could be an iron-sulfur flavoprotein with NADPH:O(2) oxidoreductase activity.</text>
</comment>
<comment type="cofactor">
    <cofactor evidence="2">
        <name>[4Fe-4S] cluster</name>
        <dbReference type="ChEBI" id="CHEBI:49883"/>
    </cofactor>
    <text evidence="2">Binds 1 [4Fe-4S] cluster.</text>
</comment>
<name>YGFK_ECO57</name>